<sequence length="58" mass="7291">MVRRRRSRSPYRRRSRSRSRSGSDRSRSRYRSRSRSRSRSRSRARSRSPYHHHINQYI</sequence>
<reference key="1">
    <citation type="journal article" date="1994" name="J. Gen. Virol.">
        <title>Genome organization of the DNA-binding protein gene region of Cryptophlebia leucotreta granulosis virus is closely related to that of nuclear polyhedrosis viruses.</title>
        <authorList>
            <person name="Jehle J.A."/>
            <person name="Backhaus H."/>
        </authorList>
    </citation>
    <scope>NUCLEOTIDE SEQUENCE [GENOMIC DNA]</scope>
    <source>
        <strain>CV3</strain>
    </source>
</reference>
<reference key="2">
    <citation type="journal article" date="2003" name="Virology">
        <title>The genome of the Cryptophlebia leucotreta granulovirus.</title>
        <authorList>
            <person name="Lange M."/>
            <person name="Jehle J.A."/>
        </authorList>
    </citation>
    <scope>NUCLEOTIDE SEQUENCE [LARGE SCALE GENOMIC DNA]</scope>
    <source>
        <strain>CV3</strain>
    </source>
</reference>
<organism>
    <name type="scientific">Cryptophlebia leucotreta granulosis virus</name>
    <name type="common">ClGV</name>
    <name type="synonym">Cryptophlebia leucotreta granulovirus</name>
    <dbReference type="NCBI Taxonomy" id="35254"/>
    <lineage>
        <taxon>Viruses</taxon>
        <taxon>Viruses incertae sedis</taxon>
        <taxon>Naldaviricetes</taxon>
        <taxon>Lefavirales</taxon>
        <taxon>Baculoviridae</taxon>
        <taxon>Betabaculovirus</taxon>
        <taxon>Betabaculovirus cryleucotretae</taxon>
    </lineage>
</organism>
<feature type="chain" id="PRO_0000132810" description="DNA-binding protein">
    <location>
        <begin position="1"/>
        <end position="58"/>
    </location>
</feature>
<feature type="region of interest" description="Disordered" evidence="1">
    <location>
        <begin position="1"/>
        <end position="58"/>
    </location>
</feature>
<feature type="compositionally biased region" description="Basic residues" evidence="1">
    <location>
        <begin position="1"/>
        <end position="19"/>
    </location>
</feature>
<feature type="compositionally biased region" description="Basic residues" evidence="1">
    <location>
        <begin position="28"/>
        <end position="58"/>
    </location>
</feature>
<accession>P41726</accession>
<comment type="function">
    <text>Thought to be responsible for DNA condensation during packaging of the nucleocapsids.</text>
</comment>
<comment type="subcellular location">
    <subcellularLocation>
        <location evidence="2">Virion</location>
    </subcellularLocation>
</comment>
<comment type="PTM">
    <text>Probably phosphorylated in infected cells.</text>
</comment>
<dbReference type="EMBL" id="AY229987">
    <property type="protein sequence ID" value="AAQ21672.1"/>
    <property type="molecule type" value="Genomic_DNA"/>
</dbReference>
<dbReference type="RefSeq" id="NP_891924.1">
    <property type="nucleotide sequence ID" value="NC_005068.1"/>
</dbReference>
<dbReference type="KEGG" id="vg:1725026"/>
<dbReference type="Proteomes" id="UP000203359">
    <property type="component" value="Genome"/>
</dbReference>
<dbReference type="GO" id="GO:0019013">
    <property type="term" value="C:viral nucleocapsid"/>
    <property type="evidence" value="ECO:0007669"/>
    <property type="project" value="UniProtKB-KW"/>
</dbReference>
<dbReference type="GO" id="GO:0003677">
    <property type="term" value="F:DNA binding"/>
    <property type="evidence" value="ECO:0007669"/>
    <property type="project" value="UniProtKB-KW"/>
</dbReference>
<organismHost>
    <name type="scientific">Tortricidae</name>
    <dbReference type="NCBI Taxonomy" id="7139"/>
</organismHost>
<proteinExistence type="predicted"/>
<name>BVCP_GVCL</name>
<keyword id="KW-0238">DNA-binding</keyword>
<keyword id="KW-0426">Late protein</keyword>
<keyword id="KW-0597">Phosphoprotein</keyword>
<keyword id="KW-1185">Reference proteome</keyword>
<keyword id="KW-0677">Repeat</keyword>
<keyword id="KW-0543">Viral nucleoprotein</keyword>
<keyword id="KW-0946">Virion</keyword>
<evidence type="ECO:0000256" key="1">
    <source>
        <dbReference type="SAM" id="MobiDB-lite"/>
    </source>
</evidence>
<evidence type="ECO:0000305" key="2"/>
<gene>
    <name type="primary">P7.3</name>
</gene>
<protein>
    <recommendedName>
        <fullName>DNA-binding protein</fullName>
    </recommendedName>
    <alternativeName>
        <fullName>Arginine-rich protein 7.3 kDa</fullName>
    </alternativeName>
    <alternativeName>
        <fullName>Basic viral core protein</fullName>
    </alternativeName>
    <alternativeName>
        <fullName>Nucleocapsid protein</fullName>
    </alternativeName>
</protein>